<evidence type="ECO:0000255" key="1">
    <source>
        <dbReference type="HAMAP-Rule" id="MF_00298"/>
    </source>
</evidence>
<sequence length="175" mass="20893">MIDDDGYRPNVGIVICNRQGEVLWARRYGQHSWQFPQGGINPGETPEQAMYRELFEEVGLNKKDVRILASTRNWLRYKLPKRLVRWDTKPVCIGQKQRWFLLQLMCNEAEINMQRSSTPEFDGWRWVSYWYPVRQVVSFKRDVYRRVMKEFAATVMPVQEVAPPRVPPAYRRKRG</sequence>
<name>RPPH_YERPY</name>
<reference key="1">
    <citation type="submission" date="2008-02" db="EMBL/GenBank/DDBJ databases">
        <title>Complete sequence of Yersinia pseudotuberculosis YPIII.</title>
        <authorList>
            <consortium name="US DOE Joint Genome Institute"/>
            <person name="Copeland A."/>
            <person name="Lucas S."/>
            <person name="Lapidus A."/>
            <person name="Glavina del Rio T."/>
            <person name="Dalin E."/>
            <person name="Tice H."/>
            <person name="Bruce D."/>
            <person name="Goodwin L."/>
            <person name="Pitluck S."/>
            <person name="Munk A.C."/>
            <person name="Brettin T."/>
            <person name="Detter J.C."/>
            <person name="Han C."/>
            <person name="Tapia R."/>
            <person name="Schmutz J."/>
            <person name="Larimer F."/>
            <person name="Land M."/>
            <person name="Hauser L."/>
            <person name="Challacombe J.F."/>
            <person name="Green L."/>
            <person name="Lindler L.E."/>
            <person name="Nikolich M.P."/>
            <person name="Richardson P."/>
        </authorList>
    </citation>
    <scope>NUCLEOTIDE SEQUENCE [LARGE SCALE GENOMIC DNA]</scope>
    <source>
        <strain>YPIII</strain>
    </source>
</reference>
<comment type="function">
    <text evidence="1">Accelerates the degradation of transcripts by removing pyrophosphate from the 5'-end of triphosphorylated RNA, leading to a more labile monophosphorylated state that can stimulate subsequent ribonuclease cleavage.</text>
</comment>
<comment type="cofactor">
    <cofactor evidence="1">
        <name>a divalent metal cation</name>
        <dbReference type="ChEBI" id="CHEBI:60240"/>
    </cofactor>
</comment>
<comment type="similarity">
    <text evidence="1">Belongs to the Nudix hydrolase family. RppH subfamily.</text>
</comment>
<dbReference type="EC" id="3.6.1.-" evidence="1"/>
<dbReference type="EMBL" id="CP000950">
    <property type="protein sequence ID" value="ACA67334.1"/>
    <property type="molecule type" value="Genomic_DNA"/>
</dbReference>
<dbReference type="RefSeq" id="WP_002211381.1">
    <property type="nucleotide sequence ID" value="NZ_CP009792.1"/>
</dbReference>
<dbReference type="SMR" id="B1JQC7"/>
<dbReference type="GeneID" id="57973848"/>
<dbReference type="KEGG" id="ypy:YPK_1033"/>
<dbReference type="PATRIC" id="fig|502800.11.peg.1665"/>
<dbReference type="GO" id="GO:0005737">
    <property type="term" value="C:cytoplasm"/>
    <property type="evidence" value="ECO:0007669"/>
    <property type="project" value="TreeGrafter"/>
</dbReference>
<dbReference type="GO" id="GO:0034353">
    <property type="term" value="F:mRNA 5'-diphosphatase activity"/>
    <property type="evidence" value="ECO:0007669"/>
    <property type="project" value="TreeGrafter"/>
</dbReference>
<dbReference type="GO" id="GO:0006402">
    <property type="term" value="P:mRNA catabolic process"/>
    <property type="evidence" value="ECO:0007669"/>
    <property type="project" value="TreeGrafter"/>
</dbReference>
<dbReference type="CDD" id="cd03671">
    <property type="entry name" value="NUDIX_Ap4A_hydrolase_plant_like"/>
    <property type="match status" value="1"/>
</dbReference>
<dbReference type="FunFam" id="3.90.79.10:FF:000001">
    <property type="entry name" value="RNA pyrophosphohydrolase"/>
    <property type="match status" value="1"/>
</dbReference>
<dbReference type="Gene3D" id="3.90.79.10">
    <property type="entry name" value="Nucleoside Triphosphate Pyrophosphohydrolase"/>
    <property type="match status" value="1"/>
</dbReference>
<dbReference type="HAMAP" id="MF_00298">
    <property type="entry name" value="Nudix_RppH"/>
    <property type="match status" value="1"/>
</dbReference>
<dbReference type="InterPro" id="IPR020476">
    <property type="entry name" value="Nudix_hydrolase"/>
</dbReference>
<dbReference type="InterPro" id="IPR015797">
    <property type="entry name" value="NUDIX_hydrolase-like_dom_sf"/>
</dbReference>
<dbReference type="InterPro" id="IPR020084">
    <property type="entry name" value="NUDIX_hydrolase_CS"/>
</dbReference>
<dbReference type="InterPro" id="IPR000086">
    <property type="entry name" value="NUDIX_hydrolase_dom"/>
</dbReference>
<dbReference type="InterPro" id="IPR022927">
    <property type="entry name" value="RppH"/>
</dbReference>
<dbReference type="NCBIfam" id="NF001934">
    <property type="entry name" value="PRK00714.1-1"/>
    <property type="match status" value="1"/>
</dbReference>
<dbReference type="NCBIfam" id="NF001937">
    <property type="entry name" value="PRK00714.1-4"/>
    <property type="match status" value="1"/>
</dbReference>
<dbReference type="NCBIfam" id="NF001938">
    <property type="entry name" value="PRK00714.1-5"/>
    <property type="match status" value="1"/>
</dbReference>
<dbReference type="PANTHER" id="PTHR23114">
    <property type="entry name" value="M7GPPPN-MRNA HYDROLASE"/>
    <property type="match status" value="1"/>
</dbReference>
<dbReference type="PANTHER" id="PTHR23114:SF17">
    <property type="entry name" value="M7GPPPN-MRNA HYDROLASE"/>
    <property type="match status" value="1"/>
</dbReference>
<dbReference type="Pfam" id="PF00293">
    <property type="entry name" value="NUDIX"/>
    <property type="match status" value="1"/>
</dbReference>
<dbReference type="PRINTS" id="PR00502">
    <property type="entry name" value="NUDIXFAMILY"/>
</dbReference>
<dbReference type="SUPFAM" id="SSF55811">
    <property type="entry name" value="Nudix"/>
    <property type="match status" value="1"/>
</dbReference>
<dbReference type="PROSITE" id="PS51462">
    <property type="entry name" value="NUDIX"/>
    <property type="match status" value="1"/>
</dbReference>
<dbReference type="PROSITE" id="PS00893">
    <property type="entry name" value="NUDIX_BOX"/>
    <property type="match status" value="1"/>
</dbReference>
<organism>
    <name type="scientific">Yersinia pseudotuberculosis serotype O:3 (strain YPIII)</name>
    <dbReference type="NCBI Taxonomy" id="502800"/>
    <lineage>
        <taxon>Bacteria</taxon>
        <taxon>Pseudomonadati</taxon>
        <taxon>Pseudomonadota</taxon>
        <taxon>Gammaproteobacteria</taxon>
        <taxon>Enterobacterales</taxon>
        <taxon>Yersiniaceae</taxon>
        <taxon>Yersinia</taxon>
    </lineage>
</organism>
<feature type="chain" id="PRO_1000115310" description="RNA pyrophosphohydrolase">
    <location>
        <begin position="1"/>
        <end position="175"/>
    </location>
</feature>
<feature type="domain" description="Nudix hydrolase" evidence="1">
    <location>
        <begin position="6"/>
        <end position="149"/>
    </location>
</feature>
<feature type="short sequence motif" description="Nudix box">
    <location>
        <begin position="38"/>
        <end position="59"/>
    </location>
</feature>
<proteinExistence type="inferred from homology"/>
<gene>
    <name evidence="1" type="primary">rppH</name>
    <name evidence="1" type="synonym">nudH</name>
    <name type="ordered locus">YPK_1033</name>
</gene>
<accession>B1JQC7</accession>
<protein>
    <recommendedName>
        <fullName evidence="1">RNA pyrophosphohydrolase</fullName>
        <ecNumber evidence="1">3.6.1.-</ecNumber>
    </recommendedName>
    <alternativeName>
        <fullName evidence="1">(Di)nucleoside polyphosphate hydrolase</fullName>
    </alternativeName>
</protein>
<keyword id="KW-0378">Hydrolase</keyword>